<dbReference type="EC" id="2.7.2.3" evidence="1"/>
<dbReference type="EMBL" id="CP000738">
    <property type="protein sequence ID" value="ABR61483.1"/>
    <property type="molecule type" value="Genomic_DNA"/>
</dbReference>
<dbReference type="RefSeq" id="WP_012066872.1">
    <property type="nucleotide sequence ID" value="NC_009636.1"/>
</dbReference>
<dbReference type="RefSeq" id="YP_001328318.1">
    <property type="nucleotide sequence ID" value="NC_009636.1"/>
</dbReference>
<dbReference type="SMR" id="A6UCV3"/>
<dbReference type="STRING" id="366394.Smed_2653"/>
<dbReference type="KEGG" id="smd:Smed_2653"/>
<dbReference type="PATRIC" id="fig|366394.8.peg.5852"/>
<dbReference type="eggNOG" id="COG0126">
    <property type="taxonomic scope" value="Bacteria"/>
</dbReference>
<dbReference type="HOGENOM" id="CLU_025427_0_2_5"/>
<dbReference type="OrthoDB" id="9808460at2"/>
<dbReference type="UniPathway" id="UPA00109">
    <property type="reaction ID" value="UER00185"/>
</dbReference>
<dbReference type="Proteomes" id="UP000001108">
    <property type="component" value="Chromosome"/>
</dbReference>
<dbReference type="GO" id="GO:0005829">
    <property type="term" value="C:cytosol"/>
    <property type="evidence" value="ECO:0007669"/>
    <property type="project" value="TreeGrafter"/>
</dbReference>
<dbReference type="GO" id="GO:0043531">
    <property type="term" value="F:ADP binding"/>
    <property type="evidence" value="ECO:0007669"/>
    <property type="project" value="TreeGrafter"/>
</dbReference>
<dbReference type="GO" id="GO:0005524">
    <property type="term" value="F:ATP binding"/>
    <property type="evidence" value="ECO:0007669"/>
    <property type="project" value="UniProtKB-KW"/>
</dbReference>
<dbReference type="GO" id="GO:0004618">
    <property type="term" value="F:phosphoglycerate kinase activity"/>
    <property type="evidence" value="ECO:0007669"/>
    <property type="project" value="UniProtKB-UniRule"/>
</dbReference>
<dbReference type="GO" id="GO:0006094">
    <property type="term" value="P:gluconeogenesis"/>
    <property type="evidence" value="ECO:0007669"/>
    <property type="project" value="TreeGrafter"/>
</dbReference>
<dbReference type="GO" id="GO:0006096">
    <property type="term" value="P:glycolytic process"/>
    <property type="evidence" value="ECO:0007669"/>
    <property type="project" value="UniProtKB-UniRule"/>
</dbReference>
<dbReference type="FunFam" id="3.40.50.1260:FF:000006">
    <property type="entry name" value="Phosphoglycerate kinase"/>
    <property type="match status" value="1"/>
</dbReference>
<dbReference type="FunFam" id="3.40.50.1260:FF:000031">
    <property type="entry name" value="Phosphoglycerate kinase 1"/>
    <property type="match status" value="1"/>
</dbReference>
<dbReference type="Gene3D" id="3.40.50.1260">
    <property type="entry name" value="Phosphoglycerate kinase, N-terminal domain"/>
    <property type="match status" value="2"/>
</dbReference>
<dbReference type="HAMAP" id="MF_00145">
    <property type="entry name" value="Phosphoglyc_kinase"/>
    <property type="match status" value="1"/>
</dbReference>
<dbReference type="InterPro" id="IPR001576">
    <property type="entry name" value="Phosphoglycerate_kinase"/>
</dbReference>
<dbReference type="InterPro" id="IPR015911">
    <property type="entry name" value="Phosphoglycerate_kinase_CS"/>
</dbReference>
<dbReference type="InterPro" id="IPR015824">
    <property type="entry name" value="Phosphoglycerate_kinase_N"/>
</dbReference>
<dbReference type="InterPro" id="IPR036043">
    <property type="entry name" value="Phosphoglycerate_kinase_sf"/>
</dbReference>
<dbReference type="PANTHER" id="PTHR11406">
    <property type="entry name" value="PHOSPHOGLYCERATE KINASE"/>
    <property type="match status" value="1"/>
</dbReference>
<dbReference type="PANTHER" id="PTHR11406:SF23">
    <property type="entry name" value="PHOSPHOGLYCERATE KINASE 1, CHLOROPLASTIC-RELATED"/>
    <property type="match status" value="1"/>
</dbReference>
<dbReference type="Pfam" id="PF00162">
    <property type="entry name" value="PGK"/>
    <property type="match status" value="1"/>
</dbReference>
<dbReference type="PIRSF" id="PIRSF000724">
    <property type="entry name" value="Pgk"/>
    <property type="match status" value="1"/>
</dbReference>
<dbReference type="PRINTS" id="PR00477">
    <property type="entry name" value="PHGLYCKINASE"/>
</dbReference>
<dbReference type="SUPFAM" id="SSF53748">
    <property type="entry name" value="Phosphoglycerate kinase"/>
    <property type="match status" value="1"/>
</dbReference>
<dbReference type="PROSITE" id="PS00111">
    <property type="entry name" value="PGLYCERATE_KINASE"/>
    <property type="match status" value="1"/>
</dbReference>
<proteinExistence type="inferred from homology"/>
<feature type="chain" id="PRO_1000058070" description="Phosphoglycerate kinase">
    <location>
        <begin position="1"/>
        <end position="399"/>
    </location>
</feature>
<feature type="binding site" evidence="1">
    <location>
        <begin position="22"/>
        <end position="24"/>
    </location>
    <ligand>
        <name>substrate</name>
    </ligand>
</feature>
<feature type="binding site" evidence="1">
    <location>
        <position position="37"/>
    </location>
    <ligand>
        <name>substrate</name>
    </ligand>
</feature>
<feature type="binding site" evidence="1">
    <location>
        <begin position="60"/>
        <end position="63"/>
    </location>
    <ligand>
        <name>substrate</name>
    </ligand>
</feature>
<feature type="binding site" evidence="1">
    <location>
        <position position="119"/>
    </location>
    <ligand>
        <name>substrate</name>
    </ligand>
</feature>
<feature type="binding site" evidence="1">
    <location>
        <position position="152"/>
    </location>
    <ligand>
        <name>substrate</name>
    </ligand>
</feature>
<feature type="binding site" evidence="1">
    <location>
        <position position="202"/>
    </location>
    <ligand>
        <name>ATP</name>
        <dbReference type="ChEBI" id="CHEBI:30616"/>
    </ligand>
</feature>
<feature type="binding site" evidence="1">
    <location>
        <position position="324"/>
    </location>
    <ligand>
        <name>ATP</name>
        <dbReference type="ChEBI" id="CHEBI:30616"/>
    </ligand>
</feature>
<feature type="binding site" evidence="1">
    <location>
        <begin position="354"/>
        <end position="357"/>
    </location>
    <ligand>
        <name>ATP</name>
        <dbReference type="ChEBI" id="CHEBI:30616"/>
    </ligand>
</feature>
<reference key="1">
    <citation type="submission" date="2007-06" db="EMBL/GenBank/DDBJ databases">
        <title>Complete sequence of Sinorhizobium medicae WSM419 chromosome.</title>
        <authorList>
            <consortium name="US DOE Joint Genome Institute"/>
            <person name="Copeland A."/>
            <person name="Lucas S."/>
            <person name="Lapidus A."/>
            <person name="Barry K."/>
            <person name="Glavina del Rio T."/>
            <person name="Dalin E."/>
            <person name="Tice H."/>
            <person name="Pitluck S."/>
            <person name="Chain P."/>
            <person name="Malfatti S."/>
            <person name="Shin M."/>
            <person name="Vergez L."/>
            <person name="Schmutz J."/>
            <person name="Larimer F."/>
            <person name="Land M."/>
            <person name="Hauser L."/>
            <person name="Kyrpides N."/>
            <person name="Mikhailova N."/>
            <person name="Reeve W.G."/>
            <person name="Richardson P."/>
        </authorList>
    </citation>
    <scope>NUCLEOTIDE SEQUENCE [LARGE SCALE GENOMIC DNA]</scope>
    <source>
        <strain>WSM419</strain>
    </source>
</reference>
<name>PGK_SINMW</name>
<accession>A6UCV3</accession>
<comment type="catalytic activity">
    <reaction evidence="1">
        <text>(2R)-3-phosphoglycerate + ATP = (2R)-3-phospho-glyceroyl phosphate + ADP</text>
        <dbReference type="Rhea" id="RHEA:14801"/>
        <dbReference type="ChEBI" id="CHEBI:30616"/>
        <dbReference type="ChEBI" id="CHEBI:57604"/>
        <dbReference type="ChEBI" id="CHEBI:58272"/>
        <dbReference type="ChEBI" id="CHEBI:456216"/>
        <dbReference type="EC" id="2.7.2.3"/>
    </reaction>
</comment>
<comment type="pathway">
    <text evidence="1">Carbohydrate degradation; glycolysis; pyruvate from D-glyceraldehyde 3-phosphate: step 2/5.</text>
</comment>
<comment type="subunit">
    <text evidence="1">Monomer.</text>
</comment>
<comment type="subcellular location">
    <subcellularLocation>
        <location evidence="1">Cytoplasm</location>
    </subcellularLocation>
</comment>
<comment type="similarity">
    <text evidence="1">Belongs to the phosphoglycerate kinase family.</text>
</comment>
<keyword id="KW-0067">ATP-binding</keyword>
<keyword id="KW-0963">Cytoplasm</keyword>
<keyword id="KW-0324">Glycolysis</keyword>
<keyword id="KW-0418">Kinase</keyword>
<keyword id="KW-0547">Nucleotide-binding</keyword>
<keyword id="KW-0808">Transferase</keyword>
<organism>
    <name type="scientific">Sinorhizobium medicae (strain WSM419)</name>
    <name type="common">Ensifer medicae</name>
    <dbReference type="NCBI Taxonomy" id="366394"/>
    <lineage>
        <taxon>Bacteria</taxon>
        <taxon>Pseudomonadati</taxon>
        <taxon>Pseudomonadota</taxon>
        <taxon>Alphaproteobacteria</taxon>
        <taxon>Hyphomicrobiales</taxon>
        <taxon>Rhizobiaceae</taxon>
        <taxon>Sinorhizobium/Ensifer group</taxon>
        <taxon>Sinorhizobium</taxon>
    </lineage>
</organism>
<protein>
    <recommendedName>
        <fullName evidence="1">Phosphoglycerate kinase</fullName>
        <ecNumber evidence="1">2.7.2.3</ecNumber>
    </recommendedName>
</protein>
<gene>
    <name evidence="1" type="primary">pgk</name>
    <name type="ordered locus">Smed_2653</name>
</gene>
<evidence type="ECO:0000255" key="1">
    <source>
        <dbReference type="HAMAP-Rule" id="MF_00145"/>
    </source>
</evidence>
<sequence>MTFKTLDDLTDIAGKRVLVRVDLNVPVKDGQVTDTTRIERVAPTIRELSEKGAKVVLLAHFGRPKGEPVADMSLKTIASAVEEILDQRVYFAPDCIGDKAANAIADLNDGEVLLLENTRFHKGEEKNDPAFVTALAANGDIYVNDAFSAAHRAHASTEGLAQHLPAYAGRTMQAELEALEKGLGNPQRPVVAIVGGAKVSTKIDLLQNLVKKVDALVIGGGMANTFLAAQGVDVGKSLCEHDLAETAKAILAAASEAGCAIVLPVDGVVAREFKAGADNEVVDVKAIPADAMMLDVGPKSIDAINEWISRAETLVWNGPLGAFEITPFDKATVAAAKHAAARTRSGSLVSVAGGGDTVAALNHAEVADDFTYVSTAGGAFLEWMEGKPLPGVDILKQQR</sequence>